<protein>
    <recommendedName>
        <fullName evidence="1">Porphobilinogen deaminase</fullName>
        <shortName evidence="1">PBG</shortName>
        <ecNumber evidence="1">2.5.1.61</ecNumber>
    </recommendedName>
    <alternativeName>
        <fullName evidence="1">Hydroxymethylbilane synthase</fullName>
        <shortName evidence="1">HMBS</shortName>
    </alternativeName>
    <alternativeName>
        <fullName evidence="1">Pre-uroporphyrinogen synthase</fullName>
    </alternativeName>
</protein>
<evidence type="ECO:0000255" key="1">
    <source>
        <dbReference type="HAMAP-Rule" id="MF_00260"/>
    </source>
</evidence>
<feature type="chain" id="PRO_0000304236" description="Porphobilinogen deaminase">
    <location>
        <begin position="1"/>
        <end position="305"/>
    </location>
</feature>
<feature type="modified residue" description="S-(dipyrrolylmethanemethyl)cysteine" evidence="1">
    <location>
        <position position="239"/>
    </location>
</feature>
<name>HEM3_DICNV</name>
<keyword id="KW-0627">Porphyrin biosynthesis</keyword>
<keyword id="KW-1185">Reference proteome</keyword>
<keyword id="KW-0808">Transferase</keyword>
<organism>
    <name type="scientific">Dichelobacter nodosus (strain VCS1703A)</name>
    <dbReference type="NCBI Taxonomy" id="246195"/>
    <lineage>
        <taxon>Bacteria</taxon>
        <taxon>Pseudomonadati</taxon>
        <taxon>Pseudomonadota</taxon>
        <taxon>Gammaproteobacteria</taxon>
        <taxon>Cardiobacteriales</taxon>
        <taxon>Cardiobacteriaceae</taxon>
        <taxon>Dichelobacter</taxon>
    </lineage>
</organism>
<reference key="1">
    <citation type="journal article" date="2007" name="Nat. Biotechnol.">
        <title>Genome sequence and identification of candidate vaccine antigens from the animal pathogen Dichelobacter nodosus.</title>
        <authorList>
            <person name="Myers G.S.A."/>
            <person name="Parker D."/>
            <person name="Al-Hasani K."/>
            <person name="Kennan R.M."/>
            <person name="Seemann T."/>
            <person name="Ren Q."/>
            <person name="Badger J.H."/>
            <person name="Selengut J.D."/>
            <person name="Deboy R.T."/>
            <person name="Tettelin H."/>
            <person name="Boyce J.D."/>
            <person name="McCarl V.P."/>
            <person name="Han X."/>
            <person name="Nelson W.C."/>
            <person name="Madupu R."/>
            <person name="Mohamoud Y."/>
            <person name="Holley T."/>
            <person name="Fedorova N."/>
            <person name="Khouri H."/>
            <person name="Bottomley S.P."/>
            <person name="Whittington R.J."/>
            <person name="Adler B."/>
            <person name="Songer J.G."/>
            <person name="Rood J.I."/>
            <person name="Paulsen I.T."/>
        </authorList>
    </citation>
    <scope>NUCLEOTIDE SEQUENCE [LARGE SCALE GENOMIC DNA]</scope>
    <source>
        <strain>VCS1703A</strain>
    </source>
</reference>
<sequence>MSTLRIATRKSPLALWQAEHVAQQLKQHYPELTVELVPIVTQGDILAHTPLSKIGGKNLFIKELEIAMQQNAADIAVHSMKDVGVTLPEGFVLAAILPRENPFDALVSNHYAHLNELPNGARVGTCSLRRKMQLAHYRPDLKLIDIRGNVHTRLQKLDSGAFDALILACAGLIRLQQNARIRQILPAEISLPAIGQGAIGVECRADSPFLAHIQTLNHFETAVCVQTERVVNQRLQGDCQVPIAVFATLSGKTMTLQSRIGTIDGQRMLAHQEICALEDAEKAGARCAEALIQQGAQDILHEYRK</sequence>
<accession>A5EW83</accession>
<dbReference type="EC" id="2.5.1.61" evidence="1"/>
<dbReference type="EMBL" id="CP000513">
    <property type="protein sequence ID" value="ABQ13625.1"/>
    <property type="molecule type" value="Genomic_DNA"/>
</dbReference>
<dbReference type="RefSeq" id="WP_012030643.1">
    <property type="nucleotide sequence ID" value="NC_009446.1"/>
</dbReference>
<dbReference type="SMR" id="A5EW83"/>
<dbReference type="STRING" id="246195.DNO_0299"/>
<dbReference type="KEGG" id="dno:DNO_0299"/>
<dbReference type="eggNOG" id="COG0181">
    <property type="taxonomic scope" value="Bacteria"/>
</dbReference>
<dbReference type="HOGENOM" id="CLU_019704_0_2_6"/>
<dbReference type="OrthoDB" id="9810298at2"/>
<dbReference type="UniPathway" id="UPA00251">
    <property type="reaction ID" value="UER00319"/>
</dbReference>
<dbReference type="Proteomes" id="UP000000248">
    <property type="component" value="Chromosome"/>
</dbReference>
<dbReference type="GO" id="GO:0005737">
    <property type="term" value="C:cytoplasm"/>
    <property type="evidence" value="ECO:0007669"/>
    <property type="project" value="TreeGrafter"/>
</dbReference>
<dbReference type="GO" id="GO:0004418">
    <property type="term" value="F:hydroxymethylbilane synthase activity"/>
    <property type="evidence" value="ECO:0007669"/>
    <property type="project" value="UniProtKB-UniRule"/>
</dbReference>
<dbReference type="GO" id="GO:0006782">
    <property type="term" value="P:protoporphyrinogen IX biosynthetic process"/>
    <property type="evidence" value="ECO:0007669"/>
    <property type="project" value="UniProtKB-UniRule"/>
</dbReference>
<dbReference type="CDD" id="cd13646">
    <property type="entry name" value="PBP2_EcHMBS_like"/>
    <property type="match status" value="1"/>
</dbReference>
<dbReference type="FunFam" id="3.40.190.10:FF:000004">
    <property type="entry name" value="Porphobilinogen deaminase"/>
    <property type="match status" value="1"/>
</dbReference>
<dbReference type="FunFam" id="3.40.190.10:FF:000005">
    <property type="entry name" value="Porphobilinogen deaminase"/>
    <property type="match status" value="1"/>
</dbReference>
<dbReference type="Gene3D" id="3.40.190.10">
    <property type="entry name" value="Periplasmic binding protein-like II"/>
    <property type="match status" value="2"/>
</dbReference>
<dbReference type="Gene3D" id="3.30.160.40">
    <property type="entry name" value="Porphobilinogen deaminase, C-terminal domain"/>
    <property type="match status" value="1"/>
</dbReference>
<dbReference type="HAMAP" id="MF_00260">
    <property type="entry name" value="Porphobil_deam"/>
    <property type="match status" value="1"/>
</dbReference>
<dbReference type="InterPro" id="IPR000860">
    <property type="entry name" value="HemC"/>
</dbReference>
<dbReference type="InterPro" id="IPR022419">
    <property type="entry name" value="Porphobilin_deaminase_cofac_BS"/>
</dbReference>
<dbReference type="InterPro" id="IPR022417">
    <property type="entry name" value="Porphobilin_deaminase_N"/>
</dbReference>
<dbReference type="InterPro" id="IPR022418">
    <property type="entry name" value="Porphobilinogen_deaminase_C"/>
</dbReference>
<dbReference type="InterPro" id="IPR036803">
    <property type="entry name" value="Porphobilinogen_deaminase_C_sf"/>
</dbReference>
<dbReference type="NCBIfam" id="TIGR00212">
    <property type="entry name" value="hemC"/>
    <property type="match status" value="1"/>
</dbReference>
<dbReference type="PANTHER" id="PTHR11557">
    <property type="entry name" value="PORPHOBILINOGEN DEAMINASE"/>
    <property type="match status" value="1"/>
</dbReference>
<dbReference type="PANTHER" id="PTHR11557:SF0">
    <property type="entry name" value="PORPHOBILINOGEN DEAMINASE"/>
    <property type="match status" value="1"/>
</dbReference>
<dbReference type="Pfam" id="PF01379">
    <property type="entry name" value="Porphobil_deam"/>
    <property type="match status" value="1"/>
</dbReference>
<dbReference type="Pfam" id="PF03900">
    <property type="entry name" value="Porphobil_deamC"/>
    <property type="match status" value="1"/>
</dbReference>
<dbReference type="PIRSF" id="PIRSF001438">
    <property type="entry name" value="4pyrrol_synth_OHMeBilane_synth"/>
    <property type="match status" value="1"/>
</dbReference>
<dbReference type="PRINTS" id="PR00151">
    <property type="entry name" value="PORPHBDMNASE"/>
</dbReference>
<dbReference type="SUPFAM" id="SSF53850">
    <property type="entry name" value="Periplasmic binding protein-like II"/>
    <property type="match status" value="1"/>
</dbReference>
<dbReference type="SUPFAM" id="SSF54782">
    <property type="entry name" value="Porphobilinogen deaminase (hydroxymethylbilane synthase), C-terminal domain"/>
    <property type="match status" value="1"/>
</dbReference>
<dbReference type="PROSITE" id="PS00533">
    <property type="entry name" value="PORPHOBILINOGEN_DEAM"/>
    <property type="match status" value="1"/>
</dbReference>
<comment type="function">
    <text evidence="1">Tetrapolymerization of the monopyrrole PBG into the hydroxymethylbilane pre-uroporphyrinogen in several discrete steps.</text>
</comment>
<comment type="catalytic activity">
    <reaction evidence="1">
        <text>4 porphobilinogen + H2O = hydroxymethylbilane + 4 NH4(+)</text>
        <dbReference type="Rhea" id="RHEA:13185"/>
        <dbReference type="ChEBI" id="CHEBI:15377"/>
        <dbReference type="ChEBI" id="CHEBI:28938"/>
        <dbReference type="ChEBI" id="CHEBI:57845"/>
        <dbReference type="ChEBI" id="CHEBI:58126"/>
        <dbReference type="EC" id="2.5.1.61"/>
    </reaction>
</comment>
<comment type="cofactor">
    <cofactor evidence="1">
        <name>dipyrromethane</name>
        <dbReference type="ChEBI" id="CHEBI:60342"/>
    </cofactor>
    <text evidence="1">Binds 1 dipyrromethane group covalently.</text>
</comment>
<comment type="pathway">
    <text evidence="1">Porphyrin-containing compound metabolism; protoporphyrin-IX biosynthesis; coproporphyrinogen-III from 5-aminolevulinate: step 2/4.</text>
</comment>
<comment type="subunit">
    <text evidence="1">Monomer.</text>
</comment>
<comment type="miscellaneous">
    <text evidence="1">The porphobilinogen subunits are added to the dipyrromethane group.</text>
</comment>
<comment type="similarity">
    <text evidence="1">Belongs to the HMBS family.</text>
</comment>
<gene>
    <name evidence="1" type="primary">hemC</name>
    <name type="ordered locus">DNO_0299</name>
</gene>
<proteinExistence type="inferred from homology"/>